<dbReference type="EC" id="3.1.-.-" evidence="1"/>
<dbReference type="EMBL" id="AL157959">
    <property type="protein sequence ID" value="CAM07896.1"/>
    <property type="molecule type" value="Genomic_DNA"/>
</dbReference>
<dbReference type="PIR" id="H81982">
    <property type="entry name" value="H81982"/>
</dbReference>
<dbReference type="RefSeq" id="WP_002235162.1">
    <property type="nucleotide sequence ID" value="NC_003116.1"/>
</dbReference>
<dbReference type="PDB" id="6JHW">
    <property type="method" value="X-ray"/>
    <property type="resolution" value="2.04 A"/>
    <property type="chains" value="B/D=518-655"/>
</dbReference>
<dbReference type="PDBsum" id="6JHW"/>
<dbReference type="SMR" id="A1IQ68"/>
<dbReference type="EnsemblBacteria" id="CAM07896">
    <property type="protein sequence ID" value="CAM07896"/>
    <property type="gene ID" value="NMA0631"/>
</dbReference>
<dbReference type="KEGG" id="nma:NMA0631"/>
<dbReference type="HOGENOM" id="CLU_007514_0_0_4"/>
<dbReference type="Proteomes" id="UP000000626">
    <property type="component" value="Chromosome"/>
</dbReference>
<dbReference type="GO" id="GO:0003677">
    <property type="term" value="F:DNA binding"/>
    <property type="evidence" value="ECO:0007669"/>
    <property type="project" value="UniProtKB-KW"/>
</dbReference>
<dbReference type="GO" id="GO:0004519">
    <property type="term" value="F:endonuclease activity"/>
    <property type="evidence" value="ECO:0007669"/>
    <property type="project" value="UniProtKB-UniRule"/>
</dbReference>
<dbReference type="GO" id="GO:0046872">
    <property type="term" value="F:metal ion binding"/>
    <property type="evidence" value="ECO:0007669"/>
    <property type="project" value="UniProtKB-UniRule"/>
</dbReference>
<dbReference type="GO" id="GO:0003723">
    <property type="term" value="F:RNA binding"/>
    <property type="evidence" value="ECO:0007669"/>
    <property type="project" value="UniProtKB-KW"/>
</dbReference>
<dbReference type="GO" id="GO:0051607">
    <property type="term" value="P:defense response to virus"/>
    <property type="evidence" value="ECO:0007669"/>
    <property type="project" value="UniProtKB-UniRule"/>
</dbReference>
<dbReference type="GO" id="GO:0043571">
    <property type="term" value="P:maintenance of CRISPR repeat elements"/>
    <property type="evidence" value="ECO:0007669"/>
    <property type="project" value="UniProtKB-UniRule"/>
</dbReference>
<dbReference type="CDD" id="cd09643">
    <property type="entry name" value="Csn1"/>
    <property type="match status" value="1"/>
</dbReference>
<dbReference type="Gene3D" id="3.30.420.10">
    <property type="entry name" value="Ribonuclease H-like superfamily/Ribonuclease H"/>
    <property type="match status" value="3"/>
</dbReference>
<dbReference type="HAMAP" id="MF_01480">
    <property type="entry name" value="Cas9"/>
    <property type="match status" value="1"/>
</dbReference>
<dbReference type="InterPro" id="IPR028629">
    <property type="entry name" value="Cas9"/>
</dbReference>
<dbReference type="InterPro" id="IPR033114">
    <property type="entry name" value="HNH_CAS9"/>
</dbReference>
<dbReference type="InterPro" id="IPR003615">
    <property type="entry name" value="HNH_nuc"/>
</dbReference>
<dbReference type="InterPro" id="IPR036397">
    <property type="entry name" value="RNaseH_sf"/>
</dbReference>
<dbReference type="InterPro" id="IPR041383">
    <property type="entry name" value="RuvC_III"/>
</dbReference>
<dbReference type="NCBIfam" id="TIGR01865">
    <property type="entry name" value="cas_Csn1"/>
    <property type="match status" value="1"/>
</dbReference>
<dbReference type="Pfam" id="PF13395">
    <property type="entry name" value="HNH_4"/>
    <property type="match status" value="1"/>
</dbReference>
<dbReference type="Pfam" id="PF18541">
    <property type="entry name" value="RuvC_III"/>
    <property type="match status" value="2"/>
</dbReference>
<dbReference type="PROSITE" id="PS51749">
    <property type="entry name" value="HNH_CAS9"/>
    <property type="match status" value="1"/>
</dbReference>
<sequence length="1082" mass="124321">MAAFKPNPINYILGLDIGIASVGWAMVEIDEDENPICLIDLGVRVFERAEVPKTGDSLAMARRLARSVRRLTRRRAHRLLRARRLLKREGVLQAADFDENGLIKSLPNTPWQLRAAALDRKLTPLEWSAVLLHLIKHRGYLSQRKNEGETADKELGALLKGVADNAHALQTGDFRTPAELALNKFEKESGHIRNQRGDYSHTFSRKDLQAELILLFEKQKEFGNPHVSGGLKEGIETLLMTQRPALSGDAVQKMLGHCTFEPAEPKAAKNTYTAERFIWLTKLNNLRILEQGSERPLTDTERATLMDEPYRKSKLTYAQARKLLGLEDTAFFKGLRYGKDNAEASTLMEMKAYHAISRALEKEGLKDKKSPLNLSPELQDEIGTAFSLFKTDEDITGRLKDRIQPEILEALLKHISFDKFVQISLKALRRIVPLMEQGKRYDEACAEIYGDHYGKKNTEEKIYLPPIPADEIRNPVVLRALSQARKVINGVVRRYGSPARIHIETAREVGKSFKDRKEIEKRQEENRKDREKAAAKFREYFPNFVGEPKSKDILKLRLYEQQHGKCLYSGKEINLGRLNEKGYVEIDHALPFSRTWDDSFNNKVLVLGSENQNKGNQTPYEYFNGKDNSREWQEFKARVETSRFPRSKKQRILLQKFDEDGFKERNLNDTRYVNRFLCQFVADRMRLTGKGKKRVFASNGQITNLLRGFWGLRKVRAENDRHHALDAVVVACSTVAMQQKITRFVRYKEMNAFDGKTIDKETGEVLHQKTHFPQPWEFFAQEVMIRVFGKPDGKPEFEEADTPEKLRTLLAEKLSSRPEAVHEYVTPLFVSRAPNRKMSGQGHMETVKSAKRLDEGVSVLRVPLTQLKLKDLEKMVNREREPKLYEALKARLEAHKDDPAKAFAEPFYKYDKAGNRTQQVKAVRVEQVQKTGVWVRNHNGIADNATMVRVDVFEKGDKYYLVPIYSWQVAKGILPDRAVVQGKDEEDWQLIDDSFNFKFSLHPNDLVEVITKKARMFGYFASCHRGTGNINIRIHDLDHKIGKNGILEGIGVKTALSFQKYQIDELGKEIRPCRLKKRPPVR</sequence>
<keyword id="KW-0002">3D-structure</keyword>
<keyword id="KW-0051">Antiviral defense</keyword>
<keyword id="KW-0238">DNA-binding</keyword>
<keyword id="KW-0255">Endonuclease</keyword>
<keyword id="KW-0378">Hydrolase</keyword>
<keyword id="KW-0460">Magnesium</keyword>
<keyword id="KW-0464">Manganese</keyword>
<keyword id="KW-0479">Metal-binding</keyword>
<keyword id="KW-0540">Nuclease</keyword>
<keyword id="KW-0694">RNA-binding</keyword>
<feature type="chain" id="PRO_0000429985" description="CRISPR-associated endonuclease Cas9">
    <location>
        <begin position="1"/>
        <end position="1082"/>
    </location>
</feature>
<feature type="domain" description="HNH Cas9-type" evidence="2">
    <location>
        <begin position="512"/>
        <end position="667"/>
    </location>
</feature>
<feature type="active site" description="For RuvC-like nuclease domain" evidence="1">
    <location>
        <position position="16"/>
    </location>
</feature>
<feature type="active site" description="Proton acceptor for HNH nuclease domain" evidence="1">
    <location>
        <position position="588"/>
    </location>
</feature>
<feature type="binding site" evidence="1">
    <location>
        <position position="16"/>
    </location>
    <ligand>
        <name>Mg(2+)</name>
        <dbReference type="ChEBI" id="CHEBI:18420"/>
        <label>1</label>
    </ligand>
</feature>
<feature type="binding site" evidence="1">
    <location>
        <position position="16"/>
    </location>
    <ligand>
        <name>Mg(2+)</name>
        <dbReference type="ChEBI" id="CHEBI:18420"/>
        <label>2</label>
    </ligand>
</feature>
<feature type="binding site" evidence="1">
    <location>
        <position position="504"/>
    </location>
    <ligand>
        <name>Mg(2+)</name>
        <dbReference type="ChEBI" id="CHEBI:18420"/>
        <label>1</label>
    </ligand>
</feature>
<feature type="binding site" evidence="1">
    <location>
        <position position="508"/>
    </location>
    <ligand>
        <name>Mg(2+)</name>
        <dbReference type="ChEBI" id="CHEBI:18420"/>
        <label>1</label>
    </ligand>
</feature>
<feature type="binding site" evidence="1">
    <location>
        <position position="508"/>
    </location>
    <ligand>
        <name>Mg(2+)</name>
        <dbReference type="ChEBI" id="CHEBI:18420"/>
        <label>2</label>
    </ligand>
</feature>
<feature type="binding site" evidence="1">
    <location>
        <position position="723"/>
    </location>
    <ligand>
        <name>Mg(2+)</name>
        <dbReference type="ChEBI" id="CHEBI:18420"/>
        <label>2</label>
    </ligand>
</feature>
<feature type="helix" evidence="6">
    <location>
        <begin position="518"/>
        <end position="540"/>
    </location>
</feature>
<feature type="helix" evidence="6">
    <location>
        <begin position="550"/>
        <end position="561"/>
    </location>
</feature>
<feature type="turn" evidence="6">
    <location>
        <begin position="562"/>
        <end position="564"/>
    </location>
</feature>
<feature type="turn" evidence="6">
    <location>
        <begin position="567"/>
        <end position="569"/>
    </location>
</feature>
<feature type="helix" evidence="6">
    <location>
        <begin position="575"/>
        <end position="577"/>
    </location>
</feature>
<feature type="turn" evidence="6">
    <location>
        <begin position="581"/>
        <end position="583"/>
    </location>
</feature>
<feature type="strand" evidence="6">
    <location>
        <begin position="584"/>
        <end position="590"/>
    </location>
</feature>
<feature type="strand" evidence="6">
    <location>
        <begin position="596"/>
        <end position="599"/>
    </location>
</feature>
<feature type="strand" evidence="6">
    <location>
        <begin position="603"/>
        <end position="607"/>
    </location>
</feature>
<feature type="helix" evidence="6">
    <location>
        <begin position="608"/>
        <end position="610"/>
    </location>
</feature>
<feature type="helix" evidence="6">
    <location>
        <begin position="619"/>
        <end position="622"/>
    </location>
</feature>
<feature type="turn" evidence="6">
    <location>
        <begin position="623"/>
        <end position="628"/>
    </location>
</feature>
<feature type="helix" evidence="6">
    <location>
        <begin position="630"/>
        <end position="641"/>
    </location>
</feature>
<feature type="helix" evidence="6">
    <location>
        <begin position="646"/>
        <end position="652"/>
    </location>
</feature>
<comment type="function">
    <text evidence="1 3">CRISPR (clustered regularly interspaced short palindromic repeat) is an adaptive immune system that provides protection against mobile genetic elements (viruses, transposable elements and conjugative plasmids). CRISPR clusters contain spacers, sequences complementary to antecedent mobile elements, and target invading nucleic acids. CRISPR clusters are transcribed and processed into CRISPR RNA (crRNA). In type II CRISPR systems correct processing of pre-crRNA requires a trans-encoded small RNA (tracrRNA), endogenous ribonuclease 3 (rnc) and this protein. The tracrRNA serves as a guide for ribonuclease 3-aided processing of pre-crRNA. Subsequently Cas9/crRNA/tracrRNA endonucleolytically cleaves linear or circular dsDNA target complementary to the spacer; Cas9 is inactive in the absence of the 2 guide RNAs (gRNA). Cas9 recognizes the protospacer adjacent motif (PAM) in the CRISPR repeat sequences to help distinguish self versus nonself, as targets within the bacterial CRISPR locus do not have PAMs. PAM recognition is also required for catalytic activity (By similarity). Cuts target DNA in Cas9:gRNAs mixing experiments with C.jejuni strain NCTC 11168 and P.multocoda strain Pm70.</text>
</comment>
<comment type="cofactor">
    <cofactor evidence="1">
        <name>Mg(2+)</name>
        <dbReference type="ChEBI" id="CHEBI:18420"/>
    </cofactor>
</comment>
<comment type="subunit">
    <text evidence="1">Monomer. Binds crRNA and tracrRNA.</text>
</comment>
<comment type="domain">
    <text evidence="1">Has 2 endonuclease domains. The discontinuous RuvC-like domain cleaves the target DNA noncomplementary to crRNA while the HNH nuclease domain cleaves the target DNA complementary to crRNA.</text>
</comment>
<comment type="biotechnology">
    <text evidence="4 5">The simplicity of the Cas9-gRNAs RNA-directed DNA endonuclease activity may be used to target and modify a DNA sequence of interest.</text>
</comment>
<comment type="similarity">
    <text evidence="1">Belongs to the CRISPR-associated protein Cas9 family. Subtype II-C subfamily.</text>
</comment>
<evidence type="ECO:0000255" key="1">
    <source>
        <dbReference type="HAMAP-Rule" id="MF_01480"/>
    </source>
</evidence>
<evidence type="ECO:0000255" key="2">
    <source>
        <dbReference type="PROSITE-ProRule" id="PRU01085"/>
    </source>
</evidence>
<evidence type="ECO:0000269" key="3">
    <source>
    </source>
</evidence>
<evidence type="ECO:0000305" key="4">
    <source>
    </source>
</evidence>
<evidence type="ECO:0000305" key="5">
    <source>
    </source>
</evidence>
<evidence type="ECO:0007829" key="6">
    <source>
        <dbReference type="PDB" id="6JHW"/>
    </source>
</evidence>
<accession>A1IQ68</accession>
<protein>
    <recommendedName>
        <fullName evidence="1">CRISPR-associated endonuclease Cas9</fullName>
        <ecNumber evidence="1">3.1.-.-</ecNumber>
    </recommendedName>
</protein>
<proteinExistence type="evidence at protein level"/>
<gene>
    <name evidence="1" type="primary">cas9</name>
    <name type="ordered locus">NMA0631</name>
</gene>
<organism>
    <name type="scientific">Neisseria meningitidis serogroup A / serotype 4A (strain DSM 15465 / Z2491)</name>
    <dbReference type="NCBI Taxonomy" id="122587"/>
    <lineage>
        <taxon>Bacteria</taxon>
        <taxon>Pseudomonadati</taxon>
        <taxon>Pseudomonadota</taxon>
        <taxon>Betaproteobacteria</taxon>
        <taxon>Neisseriales</taxon>
        <taxon>Neisseriaceae</taxon>
        <taxon>Neisseria</taxon>
    </lineage>
</organism>
<reference key="1">
    <citation type="journal article" date="2000" name="Nature">
        <title>Complete DNA sequence of a serogroup A strain of Neisseria meningitidis Z2491.</title>
        <authorList>
            <person name="Parkhill J."/>
            <person name="Achtman M."/>
            <person name="James K.D."/>
            <person name="Bentley S.D."/>
            <person name="Churcher C.M."/>
            <person name="Klee S.R."/>
            <person name="Morelli G."/>
            <person name="Basham D."/>
            <person name="Brown D."/>
            <person name="Chillingworth T."/>
            <person name="Davies R.M."/>
            <person name="Davis P."/>
            <person name="Devlin K."/>
            <person name="Feltwell T."/>
            <person name="Hamlin N."/>
            <person name="Holroyd S."/>
            <person name="Jagels K."/>
            <person name="Leather S."/>
            <person name="Moule S."/>
            <person name="Mungall K.L."/>
            <person name="Quail M.A."/>
            <person name="Rajandream M.A."/>
            <person name="Rutherford K.M."/>
            <person name="Simmonds M."/>
            <person name="Skelton J."/>
            <person name="Whitehead S."/>
            <person name="Spratt B.G."/>
            <person name="Barrell B.G."/>
        </authorList>
    </citation>
    <scope>NUCLEOTIDE SEQUENCE [LARGE SCALE GENOMIC DNA]</scope>
    <source>
        <strain>DSM 15465 / Z2491</strain>
    </source>
</reference>
<reference key="2">
    <citation type="journal article" date="2014" name="Nucleic Acids Res.">
        <title>Phylogeny of Cas9 determines functional exchangeability of dual-RNA and Cas9 among orthologous type II CRISPR-Cas systems.</title>
        <authorList>
            <person name="Fonfara I."/>
            <person name="Le Rhun A."/>
            <person name="Chylinski K."/>
            <person name="Makarova K.S."/>
            <person name="Lecrivain A.L."/>
            <person name="Bzdrenga J."/>
            <person name="Koonin E.V."/>
            <person name="Charpentier E."/>
        </authorList>
    </citation>
    <scope>FUNCTION AS AN ENDONUCLEASE</scope>
    <scope>POSSIBLE BIOTECHNOLOGY</scope>
    <source>
        <strain>DSM 15465 / Z2491</strain>
    </source>
</reference>
<reference key="3">
    <citation type="journal article" date="2023" name="Nat. Commun.">
        <title>Assessing and advancing the safety of CRISPR-Cas tools: from DNA to RNA editing.</title>
        <authorList>
            <person name="Tao J."/>
            <person name="Bauer D.E."/>
            <person name="Chiarle R."/>
        </authorList>
    </citation>
    <scope>REVIEW ON SAFETY OF GENOME EDITING TOOLS</scope>
</reference>
<name>CAS9_NEIMA</name>